<evidence type="ECO:0000255" key="1">
    <source>
        <dbReference type="HAMAP-Rule" id="MF_00715"/>
    </source>
</evidence>
<evidence type="ECO:0000256" key="2">
    <source>
        <dbReference type="SAM" id="MobiDB-lite"/>
    </source>
</evidence>
<accession>B7NDV6</accession>
<comment type="similarity">
    <text evidence="1">Belongs to the SlyX family.</text>
</comment>
<proteinExistence type="inferred from homology"/>
<gene>
    <name evidence="1" type="primary">slyX</name>
    <name type="ordered locus">ECUMN_3808</name>
</gene>
<name>SLYX_ECOLU</name>
<feature type="chain" id="PRO_1000195836" description="Protein SlyX">
    <location>
        <begin position="1"/>
        <end position="72"/>
    </location>
</feature>
<feature type="region of interest" description="Disordered" evidence="2">
    <location>
        <begin position="52"/>
        <end position="72"/>
    </location>
</feature>
<feature type="compositionally biased region" description="Polar residues" evidence="2">
    <location>
        <begin position="55"/>
        <end position="65"/>
    </location>
</feature>
<protein>
    <recommendedName>
        <fullName evidence="1">Protein SlyX</fullName>
    </recommendedName>
</protein>
<dbReference type="EMBL" id="CU928163">
    <property type="protein sequence ID" value="CAR14956.1"/>
    <property type="molecule type" value="Genomic_DNA"/>
</dbReference>
<dbReference type="RefSeq" id="WP_001153537.1">
    <property type="nucleotide sequence ID" value="NC_011751.1"/>
</dbReference>
<dbReference type="RefSeq" id="YP_002414461.1">
    <property type="nucleotide sequence ID" value="NC_011751.1"/>
</dbReference>
<dbReference type="SMR" id="B7NDV6"/>
<dbReference type="STRING" id="585056.ECUMN_3808"/>
<dbReference type="KEGG" id="eum:ECUMN_3808"/>
<dbReference type="PATRIC" id="fig|585056.7.peg.3982"/>
<dbReference type="HOGENOM" id="CLU_180796_4_2_6"/>
<dbReference type="Proteomes" id="UP000007097">
    <property type="component" value="Chromosome"/>
</dbReference>
<dbReference type="Gene3D" id="1.20.5.300">
    <property type="match status" value="1"/>
</dbReference>
<dbReference type="HAMAP" id="MF_00715">
    <property type="entry name" value="SlyX"/>
    <property type="match status" value="1"/>
</dbReference>
<dbReference type="InterPro" id="IPR007236">
    <property type="entry name" value="SlyX"/>
</dbReference>
<dbReference type="NCBIfam" id="NF002750">
    <property type="entry name" value="PRK02793.1"/>
    <property type="match status" value="1"/>
</dbReference>
<dbReference type="PANTHER" id="PTHR36508">
    <property type="entry name" value="PROTEIN SLYX"/>
    <property type="match status" value="1"/>
</dbReference>
<dbReference type="PANTHER" id="PTHR36508:SF1">
    <property type="entry name" value="PROTEIN SLYX"/>
    <property type="match status" value="1"/>
</dbReference>
<dbReference type="Pfam" id="PF04102">
    <property type="entry name" value="SlyX"/>
    <property type="match status" value="1"/>
</dbReference>
<reference key="1">
    <citation type="journal article" date="2009" name="PLoS Genet.">
        <title>Organised genome dynamics in the Escherichia coli species results in highly diverse adaptive paths.</title>
        <authorList>
            <person name="Touchon M."/>
            <person name="Hoede C."/>
            <person name="Tenaillon O."/>
            <person name="Barbe V."/>
            <person name="Baeriswyl S."/>
            <person name="Bidet P."/>
            <person name="Bingen E."/>
            <person name="Bonacorsi S."/>
            <person name="Bouchier C."/>
            <person name="Bouvet O."/>
            <person name="Calteau A."/>
            <person name="Chiapello H."/>
            <person name="Clermont O."/>
            <person name="Cruveiller S."/>
            <person name="Danchin A."/>
            <person name="Diard M."/>
            <person name="Dossat C."/>
            <person name="Karoui M.E."/>
            <person name="Frapy E."/>
            <person name="Garry L."/>
            <person name="Ghigo J.M."/>
            <person name="Gilles A.M."/>
            <person name="Johnson J."/>
            <person name="Le Bouguenec C."/>
            <person name="Lescat M."/>
            <person name="Mangenot S."/>
            <person name="Martinez-Jehanne V."/>
            <person name="Matic I."/>
            <person name="Nassif X."/>
            <person name="Oztas S."/>
            <person name="Petit M.A."/>
            <person name="Pichon C."/>
            <person name="Rouy Z."/>
            <person name="Ruf C.S."/>
            <person name="Schneider D."/>
            <person name="Tourret J."/>
            <person name="Vacherie B."/>
            <person name="Vallenet D."/>
            <person name="Medigue C."/>
            <person name="Rocha E.P.C."/>
            <person name="Denamur E."/>
        </authorList>
    </citation>
    <scope>NUCLEOTIDE SEQUENCE [LARGE SCALE GENOMIC DNA]</scope>
    <source>
        <strain>UMN026 / ExPEC</strain>
    </source>
</reference>
<sequence length="72" mass="8248">MQDLSFEARLAELESRLAFQEITIEELNVTVTAHEMEMAKLRDHLRLLTEKLKASQPSNIASQAEETPPPHY</sequence>
<organism>
    <name type="scientific">Escherichia coli O17:K52:H18 (strain UMN026 / ExPEC)</name>
    <dbReference type="NCBI Taxonomy" id="585056"/>
    <lineage>
        <taxon>Bacteria</taxon>
        <taxon>Pseudomonadati</taxon>
        <taxon>Pseudomonadota</taxon>
        <taxon>Gammaproteobacteria</taxon>
        <taxon>Enterobacterales</taxon>
        <taxon>Enterobacteriaceae</taxon>
        <taxon>Escherichia</taxon>
    </lineage>
</organism>